<gene>
    <name evidence="1" type="primary">modC</name>
    <name type="ordered locus">Tbd_1285</name>
</gene>
<feature type="chain" id="PRO_0000271696" description="Molybdenum import ATP-binding protein ModC">
    <location>
        <begin position="1"/>
        <end position="362"/>
    </location>
</feature>
<feature type="domain" description="ABC transporter" evidence="1">
    <location>
        <begin position="4"/>
        <end position="238"/>
    </location>
</feature>
<feature type="domain" description="Mop" evidence="2">
    <location>
        <begin position="297"/>
        <end position="362"/>
    </location>
</feature>
<feature type="binding site" evidence="1">
    <location>
        <begin position="38"/>
        <end position="45"/>
    </location>
    <ligand>
        <name>ATP</name>
        <dbReference type="ChEBI" id="CHEBI:30616"/>
    </ligand>
</feature>
<accession>Q3SJC6</accession>
<organism>
    <name type="scientific">Thiobacillus denitrificans (strain ATCC 25259 / T1)</name>
    <dbReference type="NCBI Taxonomy" id="292415"/>
    <lineage>
        <taxon>Bacteria</taxon>
        <taxon>Pseudomonadati</taxon>
        <taxon>Pseudomonadota</taxon>
        <taxon>Betaproteobacteria</taxon>
        <taxon>Nitrosomonadales</taxon>
        <taxon>Thiobacillaceae</taxon>
        <taxon>Thiobacillus</taxon>
    </lineage>
</organism>
<sequence length="362" mass="39244">MSGAGEAAIRARFRLDWPGFALDVDLDLPGQGVTALFGHSGSGKTTLLRCIAGLERAAEGELRVRGEVWQDATRFVPTHRRPLGYVFQEASLFPHLSARGNLEYGMKRSREPLARAALDDVVGLLGIGRLLDRRPEQLSGGERQRVAIARALAVKPRLLLMDEPLAALDFARKQEVLPYLERLHDELDIPVLYVSHAPDEVARLADHLVVMQDGRAHASGPLGDTLARLDLPIRLGEDVGVVLDAVVAARDPAWHLVEMAFAGGRLWARDNGQPLGHRGRVRILARDVSLSRAPVSGTSILNTLPAVVVDSVDDGHPALVLVKLRVGDSPLLARLTRRSAHALELAPGRQVYAQIKAVALVG</sequence>
<protein>
    <recommendedName>
        <fullName evidence="1">Molybdenum import ATP-binding protein ModC</fullName>
        <ecNumber evidence="1">7.3.2.5</ecNumber>
    </recommendedName>
</protein>
<evidence type="ECO:0000255" key="1">
    <source>
        <dbReference type="HAMAP-Rule" id="MF_01705"/>
    </source>
</evidence>
<evidence type="ECO:0000255" key="2">
    <source>
        <dbReference type="PROSITE-ProRule" id="PRU01213"/>
    </source>
</evidence>
<name>MODC_THIDA</name>
<keyword id="KW-0067">ATP-binding</keyword>
<keyword id="KW-0997">Cell inner membrane</keyword>
<keyword id="KW-1003">Cell membrane</keyword>
<keyword id="KW-0472">Membrane</keyword>
<keyword id="KW-0500">Molybdenum</keyword>
<keyword id="KW-0547">Nucleotide-binding</keyword>
<keyword id="KW-1185">Reference proteome</keyword>
<keyword id="KW-1278">Translocase</keyword>
<keyword id="KW-0813">Transport</keyword>
<reference key="1">
    <citation type="journal article" date="2006" name="J. Bacteriol.">
        <title>The genome sequence of the obligately chemolithoautotrophic, facultatively anaerobic bacterium Thiobacillus denitrificans.</title>
        <authorList>
            <person name="Beller H.R."/>
            <person name="Chain P.S."/>
            <person name="Letain T.E."/>
            <person name="Chakicherla A."/>
            <person name="Larimer F.W."/>
            <person name="Richardson P.M."/>
            <person name="Coleman M.A."/>
            <person name="Wood A.P."/>
            <person name="Kelly D.P."/>
        </authorList>
    </citation>
    <scope>NUCLEOTIDE SEQUENCE [LARGE SCALE GENOMIC DNA]</scope>
    <source>
        <strain>ATCC 25259 / T1</strain>
    </source>
</reference>
<proteinExistence type="inferred from homology"/>
<comment type="function">
    <text evidence="1">Part of the ABC transporter complex ModABC involved in molybdenum import. Responsible for energy coupling to the transport system.</text>
</comment>
<comment type="catalytic activity">
    <reaction evidence="1">
        <text>molybdate(out) + ATP + H2O = molybdate(in) + ADP + phosphate + H(+)</text>
        <dbReference type="Rhea" id="RHEA:22020"/>
        <dbReference type="ChEBI" id="CHEBI:15377"/>
        <dbReference type="ChEBI" id="CHEBI:15378"/>
        <dbReference type="ChEBI" id="CHEBI:30616"/>
        <dbReference type="ChEBI" id="CHEBI:36264"/>
        <dbReference type="ChEBI" id="CHEBI:43474"/>
        <dbReference type="ChEBI" id="CHEBI:456216"/>
        <dbReference type="EC" id="7.3.2.5"/>
    </reaction>
</comment>
<comment type="subunit">
    <text evidence="1">The complex is composed of two ATP-binding proteins (ModC), two transmembrane proteins (ModB) and a solute-binding protein (ModA).</text>
</comment>
<comment type="subcellular location">
    <subcellularLocation>
        <location evidence="1">Cell inner membrane</location>
        <topology evidence="1">Peripheral membrane protein</topology>
    </subcellularLocation>
</comment>
<comment type="similarity">
    <text evidence="1">Belongs to the ABC transporter superfamily. Molybdate importer (TC 3.A.1.8) family.</text>
</comment>
<dbReference type="EC" id="7.3.2.5" evidence="1"/>
<dbReference type="EMBL" id="CP000116">
    <property type="protein sequence ID" value="AAZ97238.1"/>
    <property type="molecule type" value="Genomic_DNA"/>
</dbReference>
<dbReference type="RefSeq" id="WP_011311797.1">
    <property type="nucleotide sequence ID" value="NC_007404.1"/>
</dbReference>
<dbReference type="SMR" id="Q3SJC6"/>
<dbReference type="STRING" id="292415.Tbd_1285"/>
<dbReference type="KEGG" id="tbd:Tbd_1285"/>
<dbReference type="eggNOG" id="COG4148">
    <property type="taxonomic scope" value="Bacteria"/>
</dbReference>
<dbReference type="HOGENOM" id="CLU_000604_1_1_4"/>
<dbReference type="OrthoDB" id="5298774at2"/>
<dbReference type="Proteomes" id="UP000008291">
    <property type="component" value="Chromosome"/>
</dbReference>
<dbReference type="GO" id="GO:0005886">
    <property type="term" value="C:plasma membrane"/>
    <property type="evidence" value="ECO:0007669"/>
    <property type="project" value="UniProtKB-SubCell"/>
</dbReference>
<dbReference type="GO" id="GO:0015412">
    <property type="term" value="F:ABC-type molybdate transporter activity"/>
    <property type="evidence" value="ECO:0007669"/>
    <property type="project" value="UniProtKB-EC"/>
</dbReference>
<dbReference type="GO" id="GO:0005524">
    <property type="term" value="F:ATP binding"/>
    <property type="evidence" value="ECO:0007669"/>
    <property type="project" value="UniProtKB-KW"/>
</dbReference>
<dbReference type="GO" id="GO:0016887">
    <property type="term" value="F:ATP hydrolysis activity"/>
    <property type="evidence" value="ECO:0007669"/>
    <property type="project" value="InterPro"/>
</dbReference>
<dbReference type="Gene3D" id="2.40.50.100">
    <property type="match status" value="1"/>
</dbReference>
<dbReference type="Gene3D" id="3.40.50.300">
    <property type="entry name" value="P-loop containing nucleotide triphosphate hydrolases"/>
    <property type="match status" value="1"/>
</dbReference>
<dbReference type="InterPro" id="IPR003593">
    <property type="entry name" value="AAA+_ATPase"/>
</dbReference>
<dbReference type="InterPro" id="IPR003439">
    <property type="entry name" value="ABC_transporter-like_ATP-bd"/>
</dbReference>
<dbReference type="InterPro" id="IPR017871">
    <property type="entry name" value="ABC_transporter-like_CS"/>
</dbReference>
<dbReference type="InterPro" id="IPR008995">
    <property type="entry name" value="Mo/tungstate-bd_C_term_dom"/>
</dbReference>
<dbReference type="InterPro" id="IPR011868">
    <property type="entry name" value="ModC_ABC_ATP-bd"/>
</dbReference>
<dbReference type="InterPro" id="IPR050334">
    <property type="entry name" value="Molybdenum_import_ModC"/>
</dbReference>
<dbReference type="InterPro" id="IPR004606">
    <property type="entry name" value="Mop_domain"/>
</dbReference>
<dbReference type="InterPro" id="IPR027417">
    <property type="entry name" value="P-loop_NTPase"/>
</dbReference>
<dbReference type="InterPro" id="IPR005116">
    <property type="entry name" value="Transp-assoc_OB_typ1"/>
</dbReference>
<dbReference type="NCBIfam" id="TIGR02142">
    <property type="entry name" value="modC_ABC"/>
    <property type="match status" value="1"/>
</dbReference>
<dbReference type="PANTHER" id="PTHR43514">
    <property type="entry name" value="ABC TRANSPORTER I FAMILY MEMBER 10"/>
    <property type="match status" value="1"/>
</dbReference>
<dbReference type="PANTHER" id="PTHR43514:SF10">
    <property type="entry name" value="MOLYBDENUM IMPORT ATP-BINDING PROTEIN MODC 2"/>
    <property type="match status" value="1"/>
</dbReference>
<dbReference type="Pfam" id="PF00005">
    <property type="entry name" value="ABC_tran"/>
    <property type="match status" value="1"/>
</dbReference>
<dbReference type="Pfam" id="PF03459">
    <property type="entry name" value="TOBE"/>
    <property type="match status" value="1"/>
</dbReference>
<dbReference type="SMART" id="SM00382">
    <property type="entry name" value="AAA"/>
    <property type="match status" value="1"/>
</dbReference>
<dbReference type="SUPFAM" id="SSF50331">
    <property type="entry name" value="MOP-like"/>
    <property type="match status" value="1"/>
</dbReference>
<dbReference type="SUPFAM" id="SSF52540">
    <property type="entry name" value="P-loop containing nucleoside triphosphate hydrolases"/>
    <property type="match status" value="1"/>
</dbReference>
<dbReference type="PROSITE" id="PS00211">
    <property type="entry name" value="ABC_TRANSPORTER_1"/>
    <property type="match status" value="1"/>
</dbReference>
<dbReference type="PROSITE" id="PS50893">
    <property type="entry name" value="ABC_TRANSPORTER_2"/>
    <property type="match status" value="1"/>
</dbReference>
<dbReference type="PROSITE" id="PS51241">
    <property type="entry name" value="MODC"/>
    <property type="match status" value="1"/>
</dbReference>
<dbReference type="PROSITE" id="PS51866">
    <property type="entry name" value="MOP"/>
    <property type="match status" value="1"/>
</dbReference>